<feature type="chain" id="PRO_0000159803" description="23S rRNA (guanosine-2'-O-)-methyltransferase RlmB">
    <location>
        <begin position="1"/>
        <end position="246"/>
    </location>
</feature>
<feature type="binding site" evidence="1">
    <location>
        <position position="198"/>
    </location>
    <ligand>
        <name>S-adenosyl-L-methionine</name>
        <dbReference type="ChEBI" id="CHEBI:59789"/>
    </ligand>
</feature>
<feature type="binding site" evidence="1">
    <location>
        <position position="218"/>
    </location>
    <ligand>
        <name>S-adenosyl-L-methionine</name>
        <dbReference type="ChEBI" id="CHEBI:59789"/>
    </ligand>
</feature>
<feature type="binding site" evidence="1">
    <location>
        <position position="227"/>
    </location>
    <ligand>
        <name>S-adenosyl-L-methionine</name>
        <dbReference type="ChEBI" id="CHEBI:59789"/>
    </ligand>
</feature>
<accession>Q8EAG8</accession>
<name>RLMB_SHEON</name>
<keyword id="KW-0963">Cytoplasm</keyword>
<keyword id="KW-0489">Methyltransferase</keyword>
<keyword id="KW-1185">Reference proteome</keyword>
<keyword id="KW-0698">rRNA processing</keyword>
<keyword id="KW-0949">S-adenosyl-L-methionine</keyword>
<keyword id="KW-0808">Transferase</keyword>
<organism>
    <name type="scientific">Shewanella oneidensis (strain ATCC 700550 / JCM 31522 / CIP 106686 / LMG 19005 / NCIMB 14063 / MR-1)</name>
    <dbReference type="NCBI Taxonomy" id="211586"/>
    <lineage>
        <taxon>Bacteria</taxon>
        <taxon>Pseudomonadati</taxon>
        <taxon>Pseudomonadota</taxon>
        <taxon>Gammaproteobacteria</taxon>
        <taxon>Alteromonadales</taxon>
        <taxon>Shewanellaceae</taxon>
        <taxon>Shewanella</taxon>
    </lineage>
</organism>
<gene>
    <name evidence="1" type="primary">rlmB</name>
    <name type="ordered locus">SO_3934</name>
</gene>
<sequence>MKKQDIIFGIHAVEALLKHSPERIIELWLLQGREDERLTPLIRQAKAFGTSIQVTSRKVLDEKAESTQHQGIVARVKAAKILAEHDLDELLAKTDLPFLLILDGVTDPHNLGACLRNADAAGVQGIIVPKDNSVGLTAVVSKVACGAAETVPLFQVTNLARTMRHLQEKGVWIVGTAGEADCELYQADLKGPLAIAMGAEGKGLRRLSRECCDTLVSIPMSGSVSSLNVSVATGICLFEAVRQRRS</sequence>
<reference key="1">
    <citation type="journal article" date="2002" name="Nat. Biotechnol.">
        <title>Genome sequence of the dissimilatory metal ion-reducing bacterium Shewanella oneidensis.</title>
        <authorList>
            <person name="Heidelberg J.F."/>
            <person name="Paulsen I.T."/>
            <person name="Nelson K.E."/>
            <person name="Gaidos E.J."/>
            <person name="Nelson W.C."/>
            <person name="Read T.D."/>
            <person name="Eisen J.A."/>
            <person name="Seshadri R."/>
            <person name="Ward N.L."/>
            <person name="Methe B.A."/>
            <person name="Clayton R.A."/>
            <person name="Meyer T."/>
            <person name="Tsapin A."/>
            <person name="Scott J."/>
            <person name="Beanan M.J."/>
            <person name="Brinkac L.M."/>
            <person name="Daugherty S.C."/>
            <person name="DeBoy R.T."/>
            <person name="Dodson R.J."/>
            <person name="Durkin A.S."/>
            <person name="Haft D.H."/>
            <person name="Kolonay J.F."/>
            <person name="Madupu R."/>
            <person name="Peterson J.D."/>
            <person name="Umayam L.A."/>
            <person name="White O."/>
            <person name="Wolf A.M."/>
            <person name="Vamathevan J.J."/>
            <person name="Weidman J.F."/>
            <person name="Impraim M."/>
            <person name="Lee K."/>
            <person name="Berry K.J."/>
            <person name="Lee C."/>
            <person name="Mueller J."/>
            <person name="Khouri H.M."/>
            <person name="Gill J."/>
            <person name="Utterback T.R."/>
            <person name="McDonald L.A."/>
            <person name="Feldblyum T.V."/>
            <person name="Smith H.O."/>
            <person name="Venter J.C."/>
            <person name="Nealson K.H."/>
            <person name="Fraser C.M."/>
        </authorList>
    </citation>
    <scope>NUCLEOTIDE SEQUENCE [LARGE SCALE GENOMIC DNA]</scope>
    <source>
        <strain>ATCC 700550 / JCM 31522 / CIP 106686 / LMG 19005 / NCIMB 14063 / MR-1</strain>
    </source>
</reference>
<evidence type="ECO:0000255" key="1">
    <source>
        <dbReference type="HAMAP-Rule" id="MF_01887"/>
    </source>
</evidence>
<protein>
    <recommendedName>
        <fullName evidence="1">23S rRNA (guanosine-2'-O-)-methyltransferase RlmB</fullName>
        <ecNumber evidence="1">2.1.1.185</ecNumber>
    </recommendedName>
    <alternativeName>
        <fullName evidence="1">23S rRNA (guanosine2251 2'-O)-methyltransferase</fullName>
    </alternativeName>
    <alternativeName>
        <fullName evidence="1">23S rRNA Gm2251 2'-O-methyltransferase</fullName>
    </alternativeName>
</protein>
<comment type="function">
    <text evidence="1">Specifically methylates the ribose of guanosine 2251 in 23S rRNA.</text>
</comment>
<comment type="catalytic activity">
    <reaction evidence="1">
        <text>guanosine(2251) in 23S rRNA + S-adenosyl-L-methionine = 2'-O-methylguanosine(2251) in 23S rRNA + S-adenosyl-L-homocysteine + H(+)</text>
        <dbReference type="Rhea" id="RHEA:24140"/>
        <dbReference type="Rhea" id="RHEA-COMP:10239"/>
        <dbReference type="Rhea" id="RHEA-COMP:10241"/>
        <dbReference type="ChEBI" id="CHEBI:15378"/>
        <dbReference type="ChEBI" id="CHEBI:57856"/>
        <dbReference type="ChEBI" id="CHEBI:59789"/>
        <dbReference type="ChEBI" id="CHEBI:74269"/>
        <dbReference type="ChEBI" id="CHEBI:74445"/>
        <dbReference type="EC" id="2.1.1.185"/>
    </reaction>
</comment>
<comment type="subcellular location">
    <subcellularLocation>
        <location evidence="1">Cytoplasm</location>
    </subcellularLocation>
</comment>
<comment type="similarity">
    <text evidence="1">Belongs to the class IV-like SAM-binding methyltransferase superfamily. RNA methyltransferase TrmH family. RlmB subfamily.</text>
</comment>
<proteinExistence type="inferred from homology"/>
<dbReference type="EC" id="2.1.1.185" evidence="1"/>
<dbReference type="EMBL" id="AE014299">
    <property type="protein sequence ID" value="AAN56909.1"/>
    <property type="molecule type" value="Genomic_DNA"/>
</dbReference>
<dbReference type="RefSeq" id="NP_719465.1">
    <property type="nucleotide sequence ID" value="NC_004347.2"/>
</dbReference>
<dbReference type="RefSeq" id="WP_011073677.1">
    <property type="nucleotide sequence ID" value="NC_004347.2"/>
</dbReference>
<dbReference type="SMR" id="Q8EAG8"/>
<dbReference type="STRING" id="211586.SO_3934"/>
<dbReference type="PaxDb" id="211586-SO_3934"/>
<dbReference type="KEGG" id="son:SO_3934"/>
<dbReference type="PATRIC" id="fig|211586.12.peg.3817"/>
<dbReference type="eggNOG" id="COG0566">
    <property type="taxonomic scope" value="Bacteria"/>
</dbReference>
<dbReference type="HOGENOM" id="CLU_021322_0_1_6"/>
<dbReference type="OrthoDB" id="9785673at2"/>
<dbReference type="PhylomeDB" id="Q8EAG8"/>
<dbReference type="BioCyc" id="SONE211586:G1GMP-3651-MONOMER"/>
<dbReference type="Proteomes" id="UP000008186">
    <property type="component" value="Chromosome"/>
</dbReference>
<dbReference type="GO" id="GO:0005829">
    <property type="term" value="C:cytosol"/>
    <property type="evidence" value="ECO:0000318"/>
    <property type="project" value="GO_Central"/>
</dbReference>
<dbReference type="GO" id="GO:0003723">
    <property type="term" value="F:RNA binding"/>
    <property type="evidence" value="ECO:0007669"/>
    <property type="project" value="InterPro"/>
</dbReference>
<dbReference type="GO" id="GO:0070039">
    <property type="term" value="F:rRNA (guanosine-2'-O-)-methyltransferase activity"/>
    <property type="evidence" value="ECO:0000318"/>
    <property type="project" value="GO_Central"/>
</dbReference>
<dbReference type="CDD" id="cd18103">
    <property type="entry name" value="SpoU-like_RlmB"/>
    <property type="match status" value="1"/>
</dbReference>
<dbReference type="FunFam" id="3.40.1280.10:FF:000005">
    <property type="entry name" value="23S rRNA (guanosine-2'-O-)-methyltransferase RlmB"/>
    <property type="match status" value="1"/>
</dbReference>
<dbReference type="Gene3D" id="3.30.1330.30">
    <property type="match status" value="1"/>
</dbReference>
<dbReference type="Gene3D" id="3.40.1280.10">
    <property type="match status" value="1"/>
</dbReference>
<dbReference type="HAMAP" id="MF_01887">
    <property type="entry name" value="23SrRNA_methyltr_B"/>
    <property type="match status" value="1"/>
</dbReference>
<dbReference type="InterPro" id="IPR024915">
    <property type="entry name" value="23S_rRNA_MeTrfase_RlmB"/>
</dbReference>
<dbReference type="InterPro" id="IPR029028">
    <property type="entry name" value="Alpha/beta_knot_MTases"/>
</dbReference>
<dbReference type="InterPro" id="IPR029064">
    <property type="entry name" value="Ribosomal_eL30-like_sf"/>
</dbReference>
<dbReference type="InterPro" id="IPR004441">
    <property type="entry name" value="rRNA_MeTrfase_TrmH"/>
</dbReference>
<dbReference type="InterPro" id="IPR001537">
    <property type="entry name" value="SpoU_MeTrfase"/>
</dbReference>
<dbReference type="InterPro" id="IPR013123">
    <property type="entry name" value="SpoU_subst-bd"/>
</dbReference>
<dbReference type="InterPro" id="IPR029026">
    <property type="entry name" value="tRNA_m1G_MTases_N"/>
</dbReference>
<dbReference type="NCBIfam" id="NF008386">
    <property type="entry name" value="PRK11181.1"/>
    <property type="match status" value="1"/>
</dbReference>
<dbReference type="NCBIfam" id="TIGR00186">
    <property type="entry name" value="rRNA_methyl_3"/>
    <property type="match status" value="1"/>
</dbReference>
<dbReference type="PANTHER" id="PTHR46429">
    <property type="entry name" value="23S RRNA (GUANOSINE-2'-O-)-METHYLTRANSFERASE RLMB"/>
    <property type="match status" value="1"/>
</dbReference>
<dbReference type="PANTHER" id="PTHR46429:SF1">
    <property type="entry name" value="23S RRNA (GUANOSINE-2'-O-)-METHYLTRANSFERASE RLMB"/>
    <property type="match status" value="1"/>
</dbReference>
<dbReference type="Pfam" id="PF00588">
    <property type="entry name" value="SpoU_methylase"/>
    <property type="match status" value="1"/>
</dbReference>
<dbReference type="Pfam" id="PF08032">
    <property type="entry name" value="SpoU_sub_bind"/>
    <property type="match status" value="1"/>
</dbReference>
<dbReference type="SMART" id="SM00967">
    <property type="entry name" value="SpoU_sub_bind"/>
    <property type="match status" value="1"/>
</dbReference>
<dbReference type="SUPFAM" id="SSF75217">
    <property type="entry name" value="alpha/beta knot"/>
    <property type="match status" value="1"/>
</dbReference>
<dbReference type="SUPFAM" id="SSF55315">
    <property type="entry name" value="L30e-like"/>
    <property type="match status" value="1"/>
</dbReference>